<reference key="1">
    <citation type="submission" date="2007-11" db="EMBL/GenBank/DDBJ databases">
        <title>Genome sequencing of phylogenetically and phenotypically diverse Coxiella burnetii isolates.</title>
        <authorList>
            <person name="Seshadri R."/>
            <person name="Samuel J.E."/>
        </authorList>
    </citation>
    <scope>NUCLEOTIDE SEQUENCE [LARGE SCALE GENOMIC DNA]</scope>
    <source>
        <strain>RSA 331 / Henzerling II</strain>
    </source>
</reference>
<keyword id="KW-0687">Ribonucleoprotein</keyword>
<keyword id="KW-0689">Ribosomal protein</keyword>
<keyword id="KW-0694">RNA-binding</keyword>
<keyword id="KW-0699">rRNA-binding</keyword>
<proteinExistence type="inferred from homology"/>
<comment type="function">
    <text evidence="1">This protein binds to 23S rRNA in the presence of protein L20.</text>
</comment>
<comment type="subunit">
    <text evidence="1">Part of the 50S ribosomal subunit. Contacts protein L20.</text>
</comment>
<comment type="similarity">
    <text evidence="1">Belongs to the bacterial ribosomal protein bL21 family.</text>
</comment>
<protein>
    <recommendedName>
        <fullName evidence="1">Large ribosomal subunit protein bL21</fullName>
    </recommendedName>
    <alternativeName>
        <fullName evidence="2">50S ribosomal protein L21</fullName>
    </alternativeName>
</protein>
<sequence>MYAIIKTGGKQYRVTEGQMLKVEKLAQDVGQSVKFDDVLMVAAGDELHIGTPSVKDAAVTAEVVDQGRQAKIEIIKFKRRKHHMKRQGHRQDFTAVKITEIALGKAKKEVKTDGA</sequence>
<dbReference type="EMBL" id="CP000890">
    <property type="protein sequence ID" value="ABX77972.1"/>
    <property type="molecule type" value="Genomic_DNA"/>
</dbReference>
<dbReference type="RefSeq" id="WP_012220194.1">
    <property type="nucleotide sequence ID" value="NC_010117.1"/>
</dbReference>
<dbReference type="SMR" id="A9NBL3"/>
<dbReference type="KEGG" id="cbs:COXBURSA331_A0496"/>
<dbReference type="HOGENOM" id="CLU_061463_3_2_6"/>
<dbReference type="GO" id="GO:0005737">
    <property type="term" value="C:cytoplasm"/>
    <property type="evidence" value="ECO:0007669"/>
    <property type="project" value="UniProtKB-ARBA"/>
</dbReference>
<dbReference type="GO" id="GO:1990904">
    <property type="term" value="C:ribonucleoprotein complex"/>
    <property type="evidence" value="ECO:0007669"/>
    <property type="project" value="UniProtKB-KW"/>
</dbReference>
<dbReference type="GO" id="GO:0005840">
    <property type="term" value="C:ribosome"/>
    <property type="evidence" value="ECO:0007669"/>
    <property type="project" value="UniProtKB-KW"/>
</dbReference>
<dbReference type="GO" id="GO:0019843">
    <property type="term" value="F:rRNA binding"/>
    <property type="evidence" value="ECO:0007669"/>
    <property type="project" value="UniProtKB-UniRule"/>
</dbReference>
<dbReference type="GO" id="GO:0003735">
    <property type="term" value="F:structural constituent of ribosome"/>
    <property type="evidence" value="ECO:0007669"/>
    <property type="project" value="InterPro"/>
</dbReference>
<dbReference type="GO" id="GO:0006412">
    <property type="term" value="P:translation"/>
    <property type="evidence" value="ECO:0007669"/>
    <property type="project" value="UniProtKB-UniRule"/>
</dbReference>
<dbReference type="HAMAP" id="MF_01363">
    <property type="entry name" value="Ribosomal_bL21"/>
    <property type="match status" value="1"/>
</dbReference>
<dbReference type="InterPro" id="IPR028909">
    <property type="entry name" value="bL21-like"/>
</dbReference>
<dbReference type="InterPro" id="IPR036164">
    <property type="entry name" value="bL21-like_sf"/>
</dbReference>
<dbReference type="InterPro" id="IPR001787">
    <property type="entry name" value="Ribosomal_bL21"/>
</dbReference>
<dbReference type="InterPro" id="IPR018258">
    <property type="entry name" value="Ribosomal_bL21_CS"/>
</dbReference>
<dbReference type="NCBIfam" id="TIGR00061">
    <property type="entry name" value="L21"/>
    <property type="match status" value="1"/>
</dbReference>
<dbReference type="PANTHER" id="PTHR21349">
    <property type="entry name" value="50S RIBOSOMAL PROTEIN L21"/>
    <property type="match status" value="1"/>
</dbReference>
<dbReference type="PANTHER" id="PTHR21349:SF0">
    <property type="entry name" value="LARGE RIBOSOMAL SUBUNIT PROTEIN BL21M"/>
    <property type="match status" value="1"/>
</dbReference>
<dbReference type="Pfam" id="PF00829">
    <property type="entry name" value="Ribosomal_L21p"/>
    <property type="match status" value="1"/>
</dbReference>
<dbReference type="SUPFAM" id="SSF141091">
    <property type="entry name" value="L21p-like"/>
    <property type="match status" value="1"/>
</dbReference>
<dbReference type="PROSITE" id="PS01169">
    <property type="entry name" value="RIBOSOMAL_L21"/>
    <property type="match status" value="1"/>
</dbReference>
<evidence type="ECO:0000255" key="1">
    <source>
        <dbReference type="HAMAP-Rule" id="MF_01363"/>
    </source>
</evidence>
<evidence type="ECO:0000305" key="2"/>
<name>RL21_COXBR</name>
<feature type="chain" id="PRO_1000086978" description="Large ribosomal subunit protein bL21">
    <location>
        <begin position="1"/>
        <end position="115"/>
    </location>
</feature>
<accession>A9NBL3</accession>
<gene>
    <name evidence="1" type="primary">rplU</name>
    <name type="ordered locus">COXBURSA331_A0496</name>
</gene>
<organism>
    <name type="scientific">Coxiella burnetii (strain RSA 331 / Henzerling II)</name>
    <dbReference type="NCBI Taxonomy" id="360115"/>
    <lineage>
        <taxon>Bacteria</taxon>
        <taxon>Pseudomonadati</taxon>
        <taxon>Pseudomonadota</taxon>
        <taxon>Gammaproteobacteria</taxon>
        <taxon>Legionellales</taxon>
        <taxon>Coxiellaceae</taxon>
        <taxon>Coxiella</taxon>
    </lineage>
</organism>